<comment type="similarity">
    <text evidence="1">Belongs to the eukaryotic ribosomal protein eS1 family.</text>
</comment>
<sequence length="211" mass="23474">MARRAQRKAERAKVKQWYKVLAPEMFGRTPVGETLANDPNKLLGRVIETTLGDLTNNFSKQNTKLRFKIDAVAGDTAYTKFIGHEMTTDYIRSLVKRRTSRIDAVVDVTTSDGYLVRVKPSCFTVKRARANQVKAIREISRQVIISRAGNIDLNGLIQEVVLGKLSLDIYKDAKAVYPLRRVEIRKTEILAGPGEVPHPAAVPEPTVTAGS</sequence>
<reference key="1">
    <citation type="submission" date="2006-10" db="EMBL/GenBank/DDBJ databases">
        <title>Complete sequence of Methanosaeta thermophila PT.</title>
        <authorList>
            <consortium name="US DOE Joint Genome Institute"/>
            <person name="Copeland A."/>
            <person name="Lucas S."/>
            <person name="Lapidus A."/>
            <person name="Barry K."/>
            <person name="Detter J.C."/>
            <person name="Glavina del Rio T."/>
            <person name="Hammon N."/>
            <person name="Israni S."/>
            <person name="Pitluck S."/>
            <person name="Chain P."/>
            <person name="Malfatti S."/>
            <person name="Shin M."/>
            <person name="Vergez L."/>
            <person name="Schmutz J."/>
            <person name="Larimer F."/>
            <person name="Land M."/>
            <person name="Hauser L."/>
            <person name="Kyrpides N."/>
            <person name="Kim E."/>
            <person name="Smith K.S."/>
            <person name="Ingram-Smith C."/>
            <person name="Richardson P."/>
        </authorList>
    </citation>
    <scope>NUCLEOTIDE SEQUENCE [LARGE SCALE GENOMIC DNA]</scope>
    <source>
        <strain>DSM 6194 / JCM 14653 / NBRC 101360 / PT</strain>
    </source>
</reference>
<name>RS3A_METTP</name>
<protein>
    <recommendedName>
        <fullName evidence="1">Small ribosomal subunit protein eS1</fullName>
    </recommendedName>
    <alternativeName>
        <fullName evidence="2">30S ribosomal protein S3Ae</fullName>
    </alternativeName>
    <alternativeName>
        <fullName evidence="1">Ribosomal protein S1e</fullName>
    </alternativeName>
</protein>
<dbReference type="EMBL" id="CP000477">
    <property type="protein sequence ID" value="ABK13881.1"/>
    <property type="molecule type" value="Genomic_DNA"/>
</dbReference>
<dbReference type="RefSeq" id="WP_011695280.1">
    <property type="nucleotide sequence ID" value="NC_008553.1"/>
</dbReference>
<dbReference type="SMR" id="A0B5A7"/>
<dbReference type="STRING" id="349307.Mthe_0079"/>
<dbReference type="GeneID" id="4463359"/>
<dbReference type="KEGG" id="mtp:Mthe_0079"/>
<dbReference type="HOGENOM" id="CLU_062507_1_0_2"/>
<dbReference type="OrthoDB" id="30639at2157"/>
<dbReference type="Proteomes" id="UP000000674">
    <property type="component" value="Chromosome"/>
</dbReference>
<dbReference type="GO" id="GO:1990904">
    <property type="term" value="C:ribonucleoprotein complex"/>
    <property type="evidence" value="ECO:0007669"/>
    <property type="project" value="UniProtKB-KW"/>
</dbReference>
<dbReference type="GO" id="GO:0005840">
    <property type="term" value="C:ribosome"/>
    <property type="evidence" value="ECO:0007669"/>
    <property type="project" value="UniProtKB-KW"/>
</dbReference>
<dbReference type="GO" id="GO:0003735">
    <property type="term" value="F:structural constituent of ribosome"/>
    <property type="evidence" value="ECO:0007669"/>
    <property type="project" value="InterPro"/>
</dbReference>
<dbReference type="GO" id="GO:0006412">
    <property type="term" value="P:translation"/>
    <property type="evidence" value="ECO:0007669"/>
    <property type="project" value="UniProtKB-UniRule"/>
</dbReference>
<dbReference type="HAMAP" id="MF_00359">
    <property type="entry name" value="Ribosomal_eS1"/>
    <property type="match status" value="1"/>
</dbReference>
<dbReference type="InterPro" id="IPR001593">
    <property type="entry name" value="Ribosomal_eS1"/>
</dbReference>
<dbReference type="InterPro" id="IPR030838">
    <property type="entry name" value="Ribosomal_eS1_arc"/>
</dbReference>
<dbReference type="InterPro" id="IPR018281">
    <property type="entry name" value="Ribosomal_eS1_CS"/>
</dbReference>
<dbReference type="NCBIfam" id="NF003142">
    <property type="entry name" value="PRK04057.1"/>
    <property type="match status" value="1"/>
</dbReference>
<dbReference type="PANTHER" id="PTHR11830">
    <property type="entry name" value="40S RIBOSOMAL PROTEIN S3A"/>
    <property type="match status" value="1"/>
</dbReference>
<dbReference type="Pfam" id="PF01015">
    <property type="entry name" value="Ribosomal_S3Ae"/>
    <property type="match status" value="1"/>
</dbReference>
<dbReference type="SMART" id="SM01397">
    <property type="entry name" value="Ribosomal_S3Ae"/>
    <property type="match status" value="1"/>
</dbReference>
<dbReference type="PROSITE" id="PS01191">
    <property type="entry name" value="RIBOSOMAL_S3AE"/>
    <property type="match status" value="1"/>
</dbReference>
<proteinExistence type="inferred from homology"/>
<accession>A0B5A7</accession>
<gene>
    <name evidence="1" type="primary">rps3ae</name>
    <name type="ordered locus">Mthe_0079</name>
</gene>
<keyword id="KW-1185">Reference proteome</keyword>
<keyword id="KW-0687">Ribonucleoprotein</keyword>
<keyword id="KW-0689">Ribosomal protein</keyword>
<organism>
    <name type="scientific">Methanothrix thermoacetophila (strain DSM 6194 / JCM 14653 / NBRC 101360 / PT)</name>
    <name type="common">Methanosaeta thermophila</name>
    <dbReference type="NCBI Taxonomy" id="349307"/>
    <lineage>
        <taxon>Archaea</taxon>
        <taxon>Methanobacteriati</taxon>
        <taxon>Methanobacteriota</taxon>
        <taxon>Stenosarchaea group</taxon>
        <taxon>Methanomicrobia</taxon>
        <taxon>Methanotrichales</taxon>
        <taxon>Methanotrichaceae</taxon>
        <taxon>Methanothrix</taxon>
    </lineage>
</organism>
<feature type="chain" id="PRO_1000005195" description="Small ribosomal subunit protein eS1">
    <location>
        <begin position="1"/>
        <end position="211"/>
    </location>
</feature>
<evidence type="ECO:0000255" key="1">
    <source>
        <dbReference type="HAMAP-Rule" id="MF_00359"/>
    </source>
</evidence>
<evidence type="ECO:0000305" key="2"/>